<gene>
    <name type="primary">Kbtbd13</name>
</gene>
<keyword id="KW-0963">Cytoplasm</keyword>
<keyword id="KW-0880">Kelch repeat</keyword>
<keyword id="KW-1185">Reference proteome</keyword>
<keyword id="KW-0677">Repeat</keyword>
<keyword id="KW-0832">Ubl conjugation</keyword>
<keyword id="KW-0833">Ubl conjugation pathway</keyword>
<comment type="function">
    <text evidence="1">Substrate-specific adapter of a BCR (BTB-CUL3-RBX1) E3 ubiquitin ligase complex.</text>
</comment>
<comment type="pathway">
    <text>Protein modification; protein ubiquitination.</text>
</comment>
<comment type="subunit">
    <text evidence="1">Component of the BCR(KBTBD13) E3 ubiquitin ligase complex, at least composed of CUL3 and KBTBD13 and RBX1. Interacts with CUL3 (By similarity).</text>
</comment>
<comment type="subcellular location">
    <subcellularLocation>
        <location evidence="1">Cytoplasm</location>
    </subcellularLocation>
</comment>
<comment type="tissue specificity">
    <text evidence="3">Expressed in skeletal muscle, heart and lung.</text>
</comment>
<comment type="domain">
    <text evidence="1">The BCB domain mediates the interaction with CUL3.</text>
</comment>
<comment type="PTM">
    <text evidence="1">Autoubiquitinated.</text>
</comment>
<comment type="sequence caution" evidence="4">
    <conflict type="erroneous initiation">
        <sequence resource="EMBL-CDS" id="BAC33390"/>
    </conflict>
    <text>Truncated N-terminus.</text>
</comment>
<reference key="1">
    <citation type="journal article" date="2009" name="PLoS Biol.">
        <title>Lineage-specific biology revealed by a finished genome assembly of the mouse.</title>
        <authorList>
            <person name="Church D.M."/>
            <person name="Goodstadt L."/>
            <person name="Hillier L.W."/>
            <person name="Zody M.C."/>
            <person name="Goldstein S."/>
            <person name="She X."/>
            <person name="Bult C.J."/>
            <person name="Agarwala R."/>
            <person name="Cherry J.L."/>
            <person name="DiCuccio M."/>
            <person name="Hlavina W."/>
            <person name="Kapustin Y."/>
            <person name="Meric P."/>
            <person name="Maglott D."/>
            <person name="Birtle Z."/>
            <person name="Marques A.C."/>
            <person name="Graves T."/>
            <person name="Zhou S."/>
            <person name="Teague B."/>
            <person name="Potamousis K."/>
            <person name="Churas C."/>
            <person name="Place M."/>
            <person name="Herschleb J."/>
            <person name="Runnheim R."/>
            <person name="Forrest D."/>
            <person name="Amos-Landgraf J."/>
            <person name="Schwartz D.C."/>
            <person name="Cheng Z."/>
            <person name="Lindblad-Toh K."/>
            <person name="Eichler E.E."/>
            <person name="Ponting C.P."/>
        </authorList>
    </citation>
    <scope>NUCLEOTIDE SEQUENCE [LARGE SCALE GENOMIC DNA]</scope>
    <source>
        <strain>C57BL/6J</strain>
    </source>
</reference>
<reference key="2">
    <citation type="journal article" date="2005" name="Science">
        <title>The transcriptional landscape of the mammalian genome.</title>
        <authorList>
            <person name="Carninci P."/>
            <person name="Kasukawa T."/>
            <person name="Katayama S."/>
            <person name="Gough J."/>
            <person name="Frith M.C."/>
            <person name="Maeda N."/>
            <person name="Oyama R."/>
            <person name="Ravasi T."/>
            <person name="Lenhard B."/>
            <person name="Wells C."/>
            <person name="Kodzius R."/>
            <person name="Shimokawa K."/>
            <person name="Bajic V.B."/>
            <person name="Brenner S.E."/>
            <person name="Batalov S."/>
            <person name="Forrest A.R."/>
            <person name="Zavolan M."/>
            <person name="Davis M.J."/>
            <person name="Wilming L.G."/>
            <person name="Aidinis V."/>
            <person name="Allen J.E."/>
            <person name="Ambesi-Impiombato A."/>
            <person name="Apweiler R."/>
            <person name="Aturaliya R.N."/>
            <person name="Bailey T.L."/>
            <person name="Bansal M."/>
            <person name="Baxter L."/>
            <person name="Beisel K.W."/>
            <person name="Bersano T."/>
            <person name="Bono H."/>
            <person name="Chalk A.M."/>
            <person name="Chiu K.P."/>
            <person name="Choudhary V."/>
            <person name="Christoffels A."/>
            <person name="Clutterbuck D.R."/>
            <person name="Crowe M.L."/>
            <person name="Dalla E."/>
            <person name="Dalrymple B.P."/>
            <person name="de Bono B."/>
            <person name="Della Gatta G."/>
            <person name="di Bernardo D."/>
            <person name="Down T."/>
            <person name="Engstrom P."/>
            <person name="Fagiolini M."/>
            <person name="Faulkner G."/>
            <person name="Fletcher C.F."/>
            <person name="Fukushima T."/>
            <person name="Furuno M."/>
            <person name="Futaki S."/>
            <person name="Gariboldi M."/>
            <person name="Georgii-Hemming P."/>
            <person name="Gingeras T.R."/>
            <person name="Gojobori T."/>
            <person name="Green R.E."/>
            <person name="Gustincich S."/>
            <person name="Harbers M."/>
            <person name="Hayashi Y."/>
            <person name="Hensch T.K."/>
            <person name="Hirokawa N."/>
            <person name="Hill D."/>
            <person name="Huminiecki L."/>
            <person name="Iacono M."/>
            <person name="Ikeo K."/>
            <person name="Iwama A."/>
            <person name="Ishikawa T."/>
            <person name="Jakt M."/>
            <person name="Kanapin A."/>
            <person name="Katoh M."/>
            <person name="Kawasawa Y."/>
            <person name="Kelso J."/>
            <person name="Kitamura H."/>
            <person name="Kitano H."/>
            <person name="Kollias G."/>
            <person name="Krishnan S.P."/>
            <person name="Kruger A."/>
            <person name="Kummerfeld S.K."/>
            <person name="Kurochkin I.V."/>
            <person name="Lareau L.F."/>
            <person name="Lazarevic D."/>
            <person name="Lipovich L."/>
            <person name="Liu J."/>
            <person name="Liuni S."/>
            <person name="McWilliam S."/>
            <person name="Madan Babu M."/>
            <person name="Madera M."/>
            <person name="Marchionni L."/>
            <person name="Matsuda H."/>
            <person name="Matsuzawa S."/>
            <person name="Miki H."/>
            <person name="Mignone F."/>
            <person name="Miyake S."/>
            <person name="Morris K."/>
            <person name="Mottagui-Tabar S."/>
            <person name="Mulder N."/>
            <person name="Nakano N."/>
            <person name="Nakauchi H."/>
            <person name="Ng P."/>
            <person name="Nilsson R."/>
            <person name="Nishiguchi S."/>
            <person name="Nishikawa S."/>
            <person name="Nori F."/>
            <person name="Ohara O."/>
            <person name="Okazaki Y."/>
            <person name="Orlando V."/>
            <person name="Pang K.C."/>
            <person name="Pavan W.J."/>
            <person name="Pavesi G."/>
            <person name="Pesole G."/>
            <person name="Petrovsky N."/>
            <person name="Piazza S."/>
            <person name="Reed J."/>
            <person name="Reid J.F."/>
            <person name="Ring B.Z."/>
            <person name="Ringwald M."/>
            <person name="Rost B."/>
            <person name="Ruan Y."/>
            <person name="Salzberg S.L."/>
            <person name="Sandelin A."/>
            <person name="Schneider C."/>
            <person name="Schoenbach C."/>
            <person name="Sekiguchi K."/>
            <person name="Semple C.A."/>
            <person name="Seno S."/>
            <person name="Sessa L."/>
            <person name="Sheng Y."/>
            <person name="Shibata Y."/>
            <person name="Shimada H."/>
            <person name="Shimada K."/>
            <person name="Silva D."/>
            <person name="Sinclair B."/>
            <person name="Sperling S."/>
            <person name="Stupka E."/>
            <person name="Sugiura K."/>
            <person name="Sultana R."/>
            <person name="Takenaka Y."/>
            <person name="Taki K."/>
            <person name="Tammoja K."/>
            <person name="Tan S.L."/>
            <person name="Tang S."/>
            <person name="Taylor M.S."/>
            <person name="Tegner J."/>
            <person name="Teichmann S.A."/>
            <person name="Ueda H.R."/>
            <person name="van Nimwegen E."/>
            <person name="Verardo R."/>
            <person name="Wei C.L."/>
            <person name="Yagi K."/>
            <person name="Yamanishi H."/>
            <person name="Zabarovsky E."/>
            <person name="Zhu S."/>
            <person name="Zimmer A."/>
            <person name="Hide W."/>
            <person name="Bult C."/>
            <person name="Grimmond S.M."/>
            <person name="Teasdale R.D."/>
            <person name="Liu E.T."/>
            <person name="Brusic V."/>
            <person name="Quackenbush J."/>
            <person name="Wahlestedt C."/>
            <person name="Mattick J.S."/>
            <person name="Hume D.A."/>
            <person name="Kai C."/>
            <person name="Sasaki D."/>
            <person name="Tomaru Y."/>
            <person name="Fukuda S."/>
            <person name="Kanamori-Katayama M."/>
            <person name="Suzuki M."/>
            <person name="Aoki J."/>
            <person name="Arakawa T."/>
            <person name="Iida J."/>
            <person name="Imamura K."/>
            <person name="Itoh M."/>
            <person name="Kato T."/>
            <person name="Kawaji H."/>
            <person name="Kawagashira N."/>
            <person name="Kawashima T."/>
            <person name="Kojima M."/>
            <person name="Kondo S."/>
            <person name="Konno H."/>
            <person name="Nakano K."/>
            <person name="Ninomiya N."/>
            <person name="Nishio T."/>
            <person name="Okada M."/>
            <person name="Plessy C."/>
            <person name="Shibata K."/>
            <person name="Shiraki T."/>
            <person name="Suzuki S."/>
            <person name="Tagami M."/>
            <person name="Waki K."/>
            <person name="Watahiki A."/>
            <person name="Okamura-Oho Y."/>
            <person name="Suzuki H."/>
            <person name="Kawai J."/>
            <person name="Hayashizaki Y."/>
        </authorList>
    </citation>
    <scope>NUCLEOTIDE SEQUENCE [LARGE SCALE MRNA] OF 38-458</scope>
    <source>
        <strain>C57BL/6J</strain>
        <tissue>Head</tissue>
    </source>
</reference>
<reference key="3">
    <citation type="journal article" date="2010" name="Am. J. Hum. Genet.">
        <title>Dominant mutations in KBTBD13, a member of the BTB/Kelch family, cause nemaline myopathy with cores.</title>
        <authorList>
            <person name="Sambuughin N."/>
            <person name="Yau K.S."/>
            <person name="Olive M."/>
            <person name="Duff R.M."/>
            <person name="Bayarsaikhan M."/>
            <person name="Lu S."/>
            <person name="Gonzalez-Mera L."/>
            <person name="Sivadorai P."/>
            <person name="Nowak K.J."/>
            <person name="Ravenscroft G."/>
            <person name="Mastaglia F.L."/>
            <person name="North K.N."/>
            <person name="Ilkovski B."/>
            <person name="Kremer H."/>
            <person name="Lammens M."/>
            <person name="van Engelen B.G."/>
            <person name="Fabian V."/>
            <person name="Lamont P."/>
            <person name="Davis M.R."/>
            <person name="Laing N.G."/>
            <person name="Goldfarb L.G."/>
        </authorList>
    </citation>
    <scope>TISSUE SPECIFICITY</scope>
</reference>
<protein>
    <recommendedName>
        <fullName>Kelch repeat and BTB domain-containing protein 13</fullName>
    </recommendedName>
</protein>
<dbReference type="EMBL" id="AC114645">
    <property type="status" value="NOT_ANNOTATED_CDS"/>
    <property type="molecule type" value="Genomic_DNA"/>
</dbReference>
<dbReference type="EMBL" id="AK048611">
    <property type="protein sequence ID" value="BAC33390.1"/>
    <property type="status" value="ALT_INIT"/>
    <property type="molecule type" value="mRNA"/>
</dbReference>
<dbReference type="CCDS" id="CCDS57682.1"/>
<dbReference type="RefSeq" id="NP_083250.1">
    <property type="nucleotide sequence ID" value="NM_028974.2"/>
</dbReference>
<dbReference type="SMR" id="Q8C828"/>
<dbReference type="FunCoup" id="Q8C828">
    <property type="interactions" value="26"/>
</dbReference>
<dbReference type="STRING" id="10090.ENSMUSP00000136872"/>
<dbReference type="GlyGen" id="Q8C828">
    <property type="glycosylation" value="1 site"/>
</dbReference>
<dbReference type="PhosphoSitePlus" id="Q8C828"/>
<dbReference type="PaxDb" id="10090-ENSMUSP00000136872"/>
<dbReference type="ProteomicsDB" id="269242"/>
<dbReference type="Antibodypedia" id="56472">
    <property type="antibodies" value="51 antibodies from 13 providers"/>
</dbReference>
<dbReference type="Ensembl" id="ENSMUST00000068307.4">
    <property type="protein sequence ID" value="ENSMUSP00000136872.2"/>
    <property type="gene ID" value="ENSMUSG00000054978.4"/>
</dbReference>
<dbReference type="GeneID" id="74492"/>
<dbReference type="KEGG" id="mmu:74492"/>
<dbReference type="UCSC" id="uc009qde.2">
    <property type="organism name" value="mouse"/>
</dbReference>
<dbReference type="AGR" id="MGI:1921742"/>
<dbReference type="CTD" id="390594"/>
<dbReference type="MGI" id="MGI:1921742">
    <property type="gene designation" value="Kbtbd13"/>
</dbReference>
<dbReference type="VEuPathDB" id="HostDB:ENSMUSG00000054978"/>
<dbReference type="eggNOG" id="KOG1072">
    <property type="taxonomic scope" value="Eukaryota"/>
</dbReference>
<dbReference type="GeneTree" id="ENSGT00940000161629"/>
<dbReference type="HOGENOM" id="CLU_049036_0_0_1"/>
<dbReference type="InParanoid" id="Q8C828"/>
<dbReference type="OMA" id="WSEFPSP"/>
<dbReference type="OrthoDB" id="45365at2759"/>
<dbReference type="PhylomeDB" id="Q8C828"/>
<dbReference type="TreeFam" id="TF328485"/>
<dbReference type="Reactome" id="R-MMU-8951664">
    <property type="pathway name" value="Neddylation"/>
</dbReference>
<dbReference type="Reactome" id="R-MMU-983168">
    <property type="pathway name" value="Antigen processing: Ubiquitination &amp; Proteasome degradation"/>
</dbReference>
<dbReference type="UniPathway" id="UPA00143"/>
<dbReference type="BioGRID-ORCS" id="74492">
    <property type="hits" value="2 hits in 78 CRISPR screens"/>
</dbReference>
<dbReference type="PRO" id="PR:Q8C828"/>
<dbReference type="Proteomes" id="UP000000589">
    <property type="component" value="Chromosome 9"/>
</dbReference>
<dbReference type="RNAct" id="Q8C828">
    <property type="molecule type" value="protein"/>
</dbReference>
<dbReference type="Bgee" id="ENSMUSG00000054978">
    <property type="expression patterns" value="Expressed in digastric muscle group and 49 other cell types or tissues"/>
</dbReference>
<dbReference type="GO" id="GO:0005737">
    <property type="term" value="C:cytoplasm"/>
    <property type="evidence" value="ECO:0007669"/>
    <property type="project" value="UniProtKB-SubCell"/>
</dbReference>
<dbReference type="GO" id="GO:0051015">
    <property type="term" value="F:actin filament binding"/>
    <property type="evidence" value="ECO:0000314"/>
    <property type="project" value="MGI"/>
</dbReference>
<dbReference type="GO" id="GO:0007015">
    <property type="term" value="P:actin filament organization"/>
    <property type="evidence" value="ECO:0000315"/>
    <property type="project" value="MGI"/>
</dbReference>
<dbReference type="GO" id="GO:0016567">
    <property type="term" value="P:protein ubiquitination"/>
    <property type="evidence" value="ECO:0007669"/>
    <property type="project" value="UniProtKB-UniPathway"/>
</dbReference>
<dbReference type="GO" id="GO:0014728">
    <property type="term" value="P:regulation of the force of skeletal muscle contraction"/>
    <property type="evidence" value="ECO:0000315"/>
    <property type="project" value="MGI"/>
</dbReference>
<dbReference type="GO" id="GO:0090076">
    <property type="term" value="P:relaxation of skeletal muscle"/>
    <property type="evidence" value="ECO:0000315"/>
    <property type="project" value="MGI"/>
</dbReference>
<dbReference type="CDD" id="cd18486">
    <property type="entry name" value="BACK_KBTBD13"/>
    <property type="match status" value="1"/>
</dbReference>
<dbReference type="Gene3D" id="2.120.10.80">
    <property type="entry name" value="Kelch-type beta propeller"/>
    <property type="match status" value="1"/>
</dbReference>
<dbReference type="Gene3D" id="3.30.710.10">
    <property type="entry name" value="Potassium Channel Kv1.1, Chain A"/>
    <property type="match status" value="1"/>
</dbReference>
<dbReference type="InterPro" id="IPR000210">
    <property type="entry name" value="BTB/POZ_dom"/>
</dbReference>
<dbReference type="InterPro" id="IPR052392">
    <property type="entry name" value="Kelch-BTB_domain-containing"/>
</dbReference>
<dbReference type="InterPro" id="IPR015915">
    <property type="entry name" value="Kelch-typ_b-propeller"/>
</dbReference>
<dbReference type="InterPro" id="IPR006652">
    <property type="entry name" value="Kelch_1"/>
</dbReference>
<dbReference type="InterPro" id="IPR011333">
    <property type="entry name" value="SKP1/BTB/POZ_sf"/>
</dbReference>
<dbReference type="PANTHER" id="PTHR46375:SF3">
    <property type="entry name" value="KELCH REPEAT AND BTB DOMAIN-CONTAINING PROTEIN 13"/>
    <property type="match status" value="1"/>
</dbReference>
<dbReference type="PANTHER" id="PTHR46375">
    <property type="entry name" value="KELCH REPEAT AND BTB DOMAIN-CONTAINING PROTEIN 13-RELATED"/>
    <property type="match status" value="1"/>
</dbReference>
<dbReference type="Pfam" id="PF00651">
    <property type="entry name" value="BTB"/>
    <property type="match status" value="1"/>
</dbReference>
<dbReference type="Pfam" id="PF01344">
    <property type="entry name" value="Kelch_1"/>
    <property type="match status" value="2"/>
</dbReference>
<dbReference type="SMART" id="SM00612">
    <property type="entry name" value="Kelch"/>
    <property type="match status" value="2"/>
</dbReference>
<dbReference type="SUPFAM" id="SSF117281">
    <property type="entry name" value="Kelch motif"/>
    <property type="match status" value="1"/>
</dbReference>
<dbReference type="SUPFAM" id="SSF54695">
    <property type="entry name" value="POZ domain"/>
    <property type="match status" value="1"/>
</dbReference>
<dbReference type="PROSITE" id="PS50097">
    <property type="entry name" value="BTB"/>
    <property type="match status" value="1"/>
</dbReference>
<evidence type="ECO:0000250" key="1"/>
<evidence type="ECO:0000255" key="2">
    <source>
        <dbReference type="PROSITE-ProRule" id="PRU00037"/>
    </source>
</evidence>
<evidence type="ECO:0000269" key="3">
    <source>
    </source>
</evidence>
<evidence type="ECO:0000305" key="4"/>
<name>KBTBD_MOUSE</name>
<sequence length="458" mass="49769">MPPGPEVPVQVWVDGQLFQAEQSLLVEHCGFFRGLFRSGMREARAAEVRLGALSASGFRTALRVLRGERPALAAEDELLQAVECAAFLQAPALARFLEHSVTSDNCSLLCDAAAAFGLRDVLHSAALFIRDGSHELVAQLELPEARAYVAALRPSTYVAVSTHTPTPGFLEDASRTMCFLDEEEDAWRTLAALPLEASTLLAGVATLGNKLYIVGGVCGASKEVVELGFCYDPEGGTWCEFPSPHQPRYDMALAGFEGRLYAIGGEFQRTPMSSVECYDPATGCWSFVADLPQPATGVPCAQARGRLFVCLWRPADITAVVEYVVQMDKWLPVAELCRSQSYGHFMVAHRDSLYVVRNGPSDDFLHCAIDCLNLVTGQWTSLPGQFVNSKGALFTSVVRGDTVYTVNRVSTLVYAIEDGTWRLLREKAGFPRPGSLQTFLLRLPPGTTGPVATALPEL</sequence>
<organism>
    <name type="scientific">Mus musculus</name>
    <name type="common">Mouse</name>
    <dbReference type="NCBI Taxonomy" id="10090"/>
    <lineage>
        <taxon>Eukaryota</taxon>
        <taxon>Metazoa</taxon>
        <taxon>Chordata</taxon>
        <taxon>Craniata</taxon>
        <taxon>Vertebrata</taxon>
        <taxon>Euteleostomi</taxon>
        <taxon>Mammalia</taxon>
        <taxon>Eutheria</taxon>
        <taxon>Euarchontoglires</taxon>
        <taxon>Glires</taxon>
        <taxon>Rodentia</taxon>
        <taxon>Myomorpha</taxon>
        <taxon>Muroidea</taxon>
        <taxon>Muridae</taxon>
        <taxon>Murinae</taxon>
        <taxon>Mus</taxon>
        <taxon>Mus</taxon>
    </lineage>
</organism>
<proteinExistence type="evidence at transcript level"/>
<feature type="chain" id="PRO_0000393907" description="Kelch repeat and BTB domain-containing protein 13">
    <location>
        <begin position="1"/>
        <end position="458"/>
    </location>
</feature>
<feature type="domain" description="BTB" evidence="2">
    <location>
        <begin position="7"/>
        <end position="74"/>
    </location>
</feature>
<feature type="repeat" description="Kelch 1">
    <location>
        <begin position="159"/>
        <end position="209"/>
    </location>
</feature>
<feature type="repeat" description="Kelch 2">
    <location>
        <begin position="210"/>
        <end position="258"/>
    </location>
</feature>
<feature type="repeat" description="Kelch 3">
    <location>
        <begin position="259"/>
        <end position="305"/>
    </location>
</feature>
<feature type="repeat" description="Kelch 4">
    <location>
        <begin position="307"/>
        <end position="350"/>
    </location>
</feature>
<feature type="repeat" description="Kelch 5">
    <location>
        <begin position="352"/>
        <end position="400"/>
    </location>
</feature>
<accession>Q8C828</accession>